<name>GATC_STAAM</name>
<feature type="chain" id="PRO_0000105330" description="Aspartyl/glutamyl-tRNA(Asn/Gln) amidotransferase subunit C">
    <location>
        <begin position="1"/>
        <end position="100"/>
    </location>
</feature>
<feature type="helix" evidence="3">
    <location>
        <begin position="6"/>
        <end position="15"/>
    </location>
</feature>
<feature type="helix" evidence="3">
    <location>
        <begin position="22"/>
        <end position="39"/>
    </location>
</feature>
<feature type="helix" evidence="3">
    <location>
        <begin position="40"/>
        <end position="44"/>
    </location>
</feature>
<feature type="helix" evidence="3">
    <location>
        <begin position="74"/>
        <end position="78"/>
    </location>
</feature>
<feature type="strand" evidence="3">
    <location>
        <begin position="82"/>
        <end position="85"/>
    </location>
</feature>
<feature type="strand" evidence="3">
    <location>
        <begin position="88"/>
        <end position="92"/>
    </location>
</feature>
<proteinExistence type="evidence at protein level"/>
<organism>
    <name type="scientific">Staphylococcus aureus (strain Mu50 / ATCC 700699)</name>
    <dbReference type="NCBI Taxonomy" id="158878"/>
    <lineage>
        <taxon>Bacteria</taxon>
        <taxon>Bacillati</taxon>
        <taxon>Bacillota</taxon>
        <taxon>Bacilli</taxon>
        <taxon>Bacillales</taxon>
        <taxon>Staphylococcaceae</taxon>
        <taxon>Staphylococcus</taxon>
    </lineage>
</organism>
<sequence>MTKVTREEVEHIANLARLQISPEETEEMANTLESILDFAKQNDSADTEGVEPTYHVLDLQNVLREDKAIKGIPQELALKNAKETEDGQFKVPTIMNEEDA</sequence>
<dbReference type="EC" id="6.3.5.-"/>
<dbReference type="EMBL" id="BA000017">
    <property type="protein sequence ID" value="BAB58063.1"/>
    <property type="molecule type" value="Genomic_DNA"/>
</dbReference>
<dbReference type="RefSeq" id="WP_000170162.1">
    <property type="nucleotide sequence ID" value="NC_002758.2"/>
</dbReference>
<dbReference type="PDB" id="2DF4">
    <property type="method" value="X-ray"/>
    <property type="resolution" value="3.20 A"/>
    <property type="chains" value="C=1-100"/>
</dbReference>
<dbReference type="PDB" id="2DQN">
    <property type="method" value="X-ray"/>
    <property type="resolution" value="2.55 A"/>
    <property type="chains" value="C=1-100"/>
</dbReference>
<dbReference type="PDB" id="2F2A">
    <property type="method" value="X-ray"/>
    <property type="resolution" value="2.30 A"/>
    <property type="chains" value="C=1-100"/>
</dbReference>
<dbReference type="PDB" id="2G5H">
    <property type="method" value="X-ray"/>
    <property type="resolution" value="2.50 A"/>
    <property type="chains" value="C=1-100"/>
</dbReference>
<dbReference type="PDB" id="2G5I">
    <property type="method" value="X-ray"/>
    <property type="resolution" value="3.35 A"/>
    <property type="chains" value="C=1-100"/>
</dbReference>
<dbReference type="PDB" id="3IP4">
    <property type="method" value="X-ray"/>
    <property type="resolution" value="1.90 A"/>
    <property type="chains" value="C=1-100"/>
</dbReference>
<dbReference type="PDBsum" id="2DF4"/>
<dbReference type="PDBsum" id="2DQN"/>
<dbReference type="PDBsum" id="2F2A"/>
<dbReference type="PDBsum" id="2G5H"/>
<dbReference type="PDBsum" id="2G5I"/>
<dbReference type="PDBsum" id="3IP4"/>
<dbReference type="SMR" id="P68807"/>
<dbReference type="GeneID" id="98346286"/>
<dbReference type="KEGG" id="sav:SAV1901"/>
<dbReference type="HOGENOM" id="CLU_105899_1_2_9"/>
<dbReference type="PhylomeDB" id="P68807"/>
<dbReference type="EvolutionaryTrace" id="P68807"/>
<dbReference type="Proteomes" id="UP000002481">
    <property type="component" value="Chromosome"/>
</dbReference>
<dbReference type="GO" id="GO:0050566">
    <property type="term" value="F:asparaginyl-tRNA synthase (glutamine-hydrolyzing) activity"/>
    <property type="evidence" value="ECO:0007669"/>
    <property type="project" value="RHEA"/>
</dbReference>
<dbReference type="GO" id="GO:0005524">
    <property type="term" value="F:ATP binding"/>
    <property type="evidence" value="ECO:0007669"/>
    <property type="project" value="UniProtKB-KW"/>
</dbReference>
<dbReference type="GO" id="GO:0050567">
    <property type="term" value="F:glutaminyl-tRNA synthase (glutamine-hydrolyzing) activity"/>
    <property type="evidence" value="ECO:0007669"/>
    <property type="project" value="UniProtKB-UniRule"/>
</dbReference>
<dbReference type="GO" id="GO:0070681">
    <property type="term" value="P:glutaminyl-tRNAGln biosynthesis via transamidation"/>
    <property type="evidence" value="ECO:0007669"/>
    <property type="project" value="TreeGrafter"/>
</dbReference>
<dbReference type="GO" id="GO:0006450">
    <property type="term" value="P:regulation of translational fidelity"/>
    <property type="evidence" value="ECO:0007669"/>
    <property type="project" value="InterPro"/>
</dbReference>
<dbReference type="GO" id="GO:0006412">
    <property type="term" value="P:translation"/>
    <property type="evidence" value="ECO:0007669"/>
    <property type="project" value="UniProtKB-UniRule"/>
</dbReference>
<dbReference type="Gene3D" id="1.10.20.60">
    <property type="entry name" value="Glu-tRNAGln amidotransferase C subunit, N-terminal domain"/>
    <property type="match status" value="1"/>
</dbReference>
<dbReference type="HAMAP" id="MF_00122">
    <property type="entry name" value="GatC"/>
    <property type="match status" value="1"/>
</dbReference>
<dbReference type="InterPro" id="IPR036113">
    <property type="entry name" value="Asp/Glu-ADT_sf_sub_c"/>
</dbReference>
<dbReference type="InterPro" id="IPR003837">
    <property type="entry name" value="GatC"/>
</dbReference>
<dbReference type="NCBIfam" id="TIGR00135">
    <property type="entry name" value="gatC"/>
    <property type="match status" value="1"/>
</dbReference>
<dbReference type="PANTHER" id="PTHR15004">
    <property type="entry name" value="GLUTAMYL-TRNA(GLN) AMIDOTRANSFERASE SUBUNIT C, MITOCHONDRIAL"/>
    <property type="match status" value="1"/>
</dbReference>
<dbReference type="PANTHER" id="PTHR15004:SF0">
    <property type="entry name" value="GLUTAMYL-TRNA(GLN) AMIDOTRANSFERASE SUBUNIT C, MITOCHONDRIAL"/>
    <property type="match status" value="1"/>
</dbReference>
<dbReference type="Pfam" id="PF02686">
    <property type="entry name" value="GatC"/>
    <property type="match status" value="1"/>
</dbReference>
<dbReference type="SUPFAM" id="SSF141000">
    <property type="entry name" value="Glu-tRNAGln amidotransferase C subunit"/>
    <property type="match status" value="1"/>
</dbReference>
<keyword id="KW-0002">3D-structure</keyword>
<keyword id="KW-0067">ATP-binding</keyword>
<keyword id="KW-0436">Ligase</keyword>
<keyword id="KW-0547">Nucleotide-binding</keyword>
<keyword id="KW-0648">Protein biosynthesis</keyword>
<gene>
    <name type="primary">gatC</name>
    <name type="ordered locus">SAV1901</name>
</gene>
<accession>P68807</accession>
<accession>Q9RF08</accession>
<evidence type="ECO:0000250" key="1"/>
<evidence type="ECO:0000305" key="2"/>
<evidence type="ECO:0007829" key="3">
    <source>
        <dbReference type="PDB" id="3IP4"/>
    </source>
</evidence>
<comment type="function">
    <text evidence="1">Allows the formation of correctly charged Asn-tRNA(Asn) or Gln-tRNA(Gln) through the transamidation of misacylated Asp-tRNA(Asn) or Glu-tRNA(Gln) in organisms which lack either or both of asparaginyl-tRNA or glutaminyl-tRNA synthetases. The reaction takes place in the presence of glutamine and ATP through an activated phospho-Asp-tRNA(Asn) or phospho-Glu-tRNA(Gln) (By similarity).</text>
</comment>
<comment type="catalytic activity">
    <reaction>
        <text>L-glutamyl-tRNA(Gln) + L-glutamine + ATP + H2O = L-glutaminyl-tRNA(Gln) + L-glutamate + ADP + phosphate + H(+)</text>
        <dbReference type="Rhea" id="RHEA:17521"/>
        <dbReference type="Rhea" id="RHEA-COMP:9681"/>
        <dbReference type="Rhea" id="RHEA-COMP:9684"/>
        <dbReference type="ChEBI" id="CHEBI:15377"/>
        <dbReference type="ChEBI" id="CHEBI:15378"/>
        <dbReference type="ChEBI" id="CHEBI:29985"/>
        <dbReference type="ChEBI" id="CHEBI:30616"/>
        <dbReference type="ChEBI" id="CHEBI:43474"/>
        <dbReference type="ChEBI" id="CHEBI:58359"/>
        <dbReference type="ChEBI" id="CHEBI:78520"/>
        <dbReference type="ChEBI" id="CHEBI:78521"/>
        <dbReference type="ChEBI" id="CHEBI:456216"/>
    </reaction>
</comment>
<comment type="catalytic activity">
    <reaction>
        <text>L-aspartyl-tRNA(Asn) + L-glutamine + ATP + H2O = L-asparaginyl-tRNA(Asn) + L-glutamate + ADP + phosphate + 2 H(+)</text>
        <dbReference type="Rhea" id="RHEA:14513"/>
        <dbReference type="Rhea" id="RHEA-COMP:9674"/>
        <dbReference type="Rhea" id="RHEA-COMP:9677"/>
        <dbReference type="ChEBI" id="CHEBI:15377"/>
        <dbReference type="ChEBI" id="CHEBI:15378"/>
        <dbReference type="ChEBI" id="CHEBI:29985"/>
        <dbReference type="ChEBI" id="CHEBI:30616"/>
        <dbReference type="ChEBI" id="CHEBI:43474"/>
        <dbReference type="ChEBI" id="CHEBI:58359"/>
        <dbReference type="ChEBI" id="CHEBI:78515"/>
        <dbReference type="ChEBI" id="CHEBI:78516"/>
        <dbReference type="ChEBI" id="CHEBI:456216"/>
    </reaction>
</comment>
<comment type="subunit">
    <text evidence="1">Heterotrimer of A, B and C subunits.</text>
</comment>
<comment type="similarity">
    <text evidence="2">Belongs to the GatC family.</text>
</comment>
<protein>
    <recommendedName>
        <fullName>Aspartyl/glutamyl-tRNA(Asn/Gln) amidotransferase subunit C</fullName>
        <shortName>Asp/Glu-ADT subunit C</shortName>
        <ecNumber>6.3.5.-</ecNumber>
    </recommendedName>
</protein>
<reference key="1">
    <citation type="journal article" date="2001" name="Lancet">
        <title>Whole genome sequencing of meticillin-resistant Staphylococcus aureus.</title>
        <authorList>
            <person name="Kuroda M."/>
            <person name="Ohta T."/>
            <person name="Uchiyama I."/>
            <person name="Baba T."/>
            <person name="Yuzawa H."/>
            <person name="Kobayashi I."/>
            <person name="Cui L."/>
            <person name="Oguchi A."/>
            <person name="Aoki K."/>
            <person name="Nagai Y."/>
            <person name="Lian J.-Q."/>
            <person name="Ito T."/>
            <person name="Kanamori M."/>
            <person name="Matsumaru H."/>
            <person name="Maruyama A."/>
            <person name="Murakami H."/>
            <person name="Hosoyama A."/>
            <person name="Mizutani-Ui Y."/>
            <person name="Takahashi N.K."/>
            <person name="Sawano T."/>
            <person name="Inoue R."/>
            <person name="Kaito C."/>
            <person name="Sekimizu K."/>
            <person name="Hirakawa H."/>
            <person name="Kuhara S."/>
            <person name="Goto S."/>
            <person name="Yabuzaki J."/>
            <person name="Kanehisa M."/>
            <person name="Yamashita A."/>
            <person name="Oshima K."/>
            <person name="Furuya K."/>
            <person name="Yoshino C."/>
            <person name="Shiba T."/>
            <person name="Hattori M."/>
            <person name="Ogasawara N."/>
            <person name="Hayashi H."/>
            <person name="Hiramatsu K."/>
        </authorList>
    </citation>
    <scope>NUCLEOTIDE SEQUENCE [LARGE SCALE GENOMIC DNA]</scope>
    <source>
        <strain>Mu50 / ATCC 700699</strain>
    </source>
</reference>